<reference key="1">
    <citation type="journal article" date="2001" name="Lancet">
        <title>Whole genome sequencing of meticillin-resistant Staphylococcus aureus.</title>
        <authorList>
            <person name="Kuroda M."/>
            <person name="Ohta T."/>
            <person name="Uchiyama I."/>
            <person name="Baba T."/>
            <person name="Yuzawa H."/>
            <person name="Kobayashi I."/>
            <person name="Cui L."/>
            <person name="Oguchi A."/>
            <person name="Aoki K."/>
            <person name="Nagai Y."/>
            <person name="Lian J.-Q."/>
            <person name="Ito T."/>
            <person name="Kanamori M."/>
            <person name="Matsumaru H."/>
            <person name="Maruyama A."/>
            <person name="Murakami H."/>
            <person name="Hosoyama A."/>
            <person name="Mizutani-Ui Y."/>
            <person name="Takahashi N.K."/>
            <person name="Sawano T."/>
            <person name="Inoue R."/>
            <person name="Kaito C."/>
            <person name="Sekimizu K."/>
            <person name="Hirakawa H."/>
            <person name="Kuhara S."/>
            <person name="Goto S."/>
            <person name="Yabuzaki J."/>
            <person name="Kanehisa M."/>
            <person name="Yamashita A."/>
            <person name="Oshima K."/>
            <person name="Furuya K."/>
            <person name="Yoshino C."/>
            <person name="Shiba T."/>
            <person name="Hattori M."/>
            <person name="Ogasawara N."/>
            <person name="Hayashi H."/>
            <person name="Hiramatsu K."/>
        </authorList>
    </citation>
    <scope>NUCLEOTIDE SEQUENCE [LARGE SCALE GENOMIC DNA]</scope>
    <source>
        <strain>Mu50 / ATCC 700699</strain>
    </source>
</reference>
<proteinExistence type="inferred from homology"/>
<name>GPDA_STAAM</name>
<comment type="function">
    <text evidence="1">Catalyzes the reduction of the glycolytic intermediate dihydroxyacetone phosphate (DHAP) to sn-glycerol 3-phosphate (G3P), the key precursor for phospholipid synthesis.</text>
</comment>
<comment type="catalytic activity">
    <reaction evidence="1">
        <text>sn-glycerol 3-phosphate + NAD(+) = dihydroxyacetone phosphate + NADH + H(+)</text>
        <dbReference type="Rhea" id="RHEA:11092"/>
        <dbReference type="ChEBI" id="CHEBI:15378"/>
        <dbReference type="ChEBI" id="CHEBI:57540"/>
        <dbReference type="ChEBI" id="CHEBI:57597"/>
        <dbReference type="ChEBI" id="CHEBI:57642"/>
        <dbReference type="ChEBI" id="CHEBI:57945"/>
        <dbReference type="EC" id="1.1.1.94"/>
    </reaction>
    <physiologicalReaction direction="right-to-left" evidence="1">
        <dbReference type="Rhea" id="RHEA:11094"/>
    </physiologicalReaction>
</comment>
<comment type="catalytic activity">
    <reaction evidence="1">
        <text>sn-glycerol 3-phosphate + NADP(+) = dihydroxyacetone phosphate + NADPH + H(+)</text>
        <dbReference type="Rhea" id="RHEA:11096"/>
        <dbReference type="ChEBI" id="CHEBI:15378"/>
        <dbReference type="ChEBI" id="CHEBI:57597"/>
        <dbReference type="ChEBI" id="CHEBI:57642"/>
        <dbReference type="ChEBI" id="CHEBI:57783"/>
        <dbReference type="ChEBI" id="CHEBI:58349"/>
        <dbReference type="EC" id="1.1.1.94"/>
    </reaction>
    <physiologicalReaction direction="right-to-left" evidence="1">
        <dbReference type="Rhea" id="RHEA:11098"/>
    </physiologicalReaction>
</comment>
<comment type="pathway">
    <text evidence="1">Membrane lipid metabolism; glycerophospholipid metabolism.</text>
</comment>
<comment type="subcellular location">
    <subcellularLocation>
        <location evidence="1">Cytoplasm</location>
    </subcellularLocation>
</comment>
<comment type="similarity">
    <text evidence="1">Belongs to the NAD-dependent glycerol-3-phosphate dehydrogenase family.</text>
</comment>
<organism>
    <name type="scientific">Staphylococcus aureus (strain Mu50 / ATCC 700699)</name>
    <dbReference type="NCBI Taxonomy" id="158878"/>
    <lineage>
        <taxon>Bacteria</taxon>
        <taxon>Bacillati</taxon>
        <taxon>Bacillota</taxon>
        <taxon>Bacilli</taxon>
        <taxon>Bacillales</taxon>
        <taxon>Staphylococcaceae</taxon>
        <taxon>Staphylococcus</taxon>
    </lineage>
</organism>
<keyword id="KW-0963">Cytoplasm</keyword>
<keyword id="KW-0444">Lipid biosynthesis</keyword>
<keyword id="KW-0443">Lipid metabolism</keyword>
<keyword id="KW-0520">NAD</keyword>
<keyword id="KW-0521">NADP</keyword>
<keyword id="KW-0547">Nucleotide-binding</keyword>
<keyword id="KW-0560">Oxidoreductase</keyword>
<keyword id="KW-0594">Phospholipid biosynthesis</keyword>
<keyword id="KW-1208">Phospholipid metabolism</keyword>
<evidence type="ECO:0000255" key="1">
    <source>
        <dbReference type="HAMAP-Rule" id="MF_00394"/>
    </source>
</evidence>
<gene>
    <name evidence="1" type="primary">gpsA</name>
    <name type="ordered locus">SAV1474</name>
</gene>
<sequence length="332" mass="36098">MTKITVFGMGSFGTALANVLAENGHDVLMWGKNQDAVDELNTCHTNKKYLKYAKLDVNIIATSDMTKAIQFADIYLMALPTKAMREVATQINDKLTSKKTFIHVAKGIENGTFKRVSEMIEDSISPEYNAGIGVLSGPSHAEEVVVKQPTTVAASSKDKSVSKLTQDLFMNDYLRVYTNDDLIGVELGGALKNIIAVASGIVAGIGYGDNAKAALMTRGLAEISRLGEKLGADPMTFLGLGGIGDLIVTCISTHSRNFTLGYKLGQGESMDQALSEMNMVVEGIYTTKSVYHLAKEKNVDMPITNALYRVLFENISVKECVKDLMERDKKSE</sequence>
<accession>P64190</accession>
<accession>Q99U16</accession>
<protein>
    <recommendedName>
        <fullName evidence="1">Glycerol-3-phosphate dehydrogenase [NAD(P)+]</fullName>
        <ecNumber evidence="1">1.1.1.94</ecNumber>
    </recommendedName>
    <alternativeName>
        <fullName evidence="1">NAD(P)(+)-dependent glycerol-3-phosphate dehydrogenase</fullName>
    </alternativeName>
    <alternativeName>
        <fullName evidence="1">NAD(P)H-dependent dihydroxyacetone-phosphate reductase</fullName>
    </alternativeName>
</protein>
<dbReference type="EC" id="1.1.1.94" evidence="1"/>
<dbReference type="EMBL" id="BA000017">
    <property type="protein sequence ID" value="BAB57636.1"/>
    <property type="molecule type" value="Genomic_DNA"/>
</dbReference>
<dbReference type="RefSeq" id="WP_000161745.1">
    <property type="nucleotide sequence ID" value="NC_002758.2"/>
</dbReference>
<dbReference type="SMR" id="P64190"/>
<dbReference type="KEGG" id="sav:SAV1474"/>
<dbReference type="HOGENOM" id="CLU_033449_0_2_9"/>
<dbReference type="PhylomeDB" id="P64190"/>
<dbReference type="UniPathway" id="UPA00940"/>
<dbReference type="Proteomes" id="UP000002481">
    <property type="component" value="Chromosome"/>
</dbReference>
<dbReference type="GO" id="GO:0005829">
    <property type="term" value="C:cytosol"/>
    <property type="evidence" value="ECO:0007669"/>
    <property type="project" value="TreeGrafter"/>
</dbReference>
<dbReference type="GO" id="GO:0047952">
    <property type="term" value="F:glycerol-3-phosphate dehydrogenase [NAD(P)+] activity"/>
    <property type="evidence" value="ECO:0007669"/>
    <property type="project" value="UniProtKB-UniRule"/>
</dbReference>
<dbReference type="GO" id="GO:0051287">
    <property type="term" value="F:NAD binding"/>
    <property type="evidence" value="ECO:0007669"/>
    <property type="project" value="InterPro"/>
</dbReference>
<dbReference type="GO" id="GO:0005975">
    <property type="term" value="P:carbohydrate metabolic process"/>
    <property type="evidence" value="ECO:0007669"/>
    <property type="project" value="InterPro"/>
</dbReference>
<dbReference type="GO" id="GO:0046167">
    <property type="term" value="P:glycerol-3-phosphate biosynthetic process"/>
    <property type="evidence" value="ECO:0007669"/>
    <property type="project" value="UniProtKB-UniRule"/>
</dbReference>
<dbReference type="GO" id="GO:0046168">
    <property type="term" value="P:glycerol-3-phosphate catabolic process"/>
    <property type="evidence" value="ECO:0007669"/>
    <property type="project" value="InterPro"/>
</dbReference>
<dbReference type="GO" id="GO:0006650">
    <property type="term" value="P:glycerophospholipid metabolic process"/>
    <property type="evidence" value="ECO:0007669"/>
    <property type="project" value="UniProtKB-UniRule"/>
</dbReference>
<dbReference type="GO" id="GO:0008654">
    <property type="term" value="P:phospholipid biosynthetic process"/>
    <property type="evidence" value="ECO:0007669"/>
    <property type="project" value="UniProtKB-KW"/>
</dbReference>
<dbReference type="FunFam" id="1.10.1040.10:FF:000001">
    <property type="entry name" value="Glycerol-3-phosphate dehydrogenase [NAD(P)+]"/>
    <property type="match status" value="1"/>
</dbReference>
<dbReference type="FunFam" id="3.40.50.720:FF:000019">
    <property type="entry name" value="Glycerol-3-phosphate dehydrogenase [NAD(P)+]"/>
    <property type="match status" value="1"/>
</dbReference>
<dbReference type="Gene3D" id="1.10.1040.10">
    <property type="entry name" value="N-(1-d-carboxylethyl)-l-norvaline Dehydrogenase, domain 2"/>
    <property type="match status" value="1"/>
</dbReference>
<dbReference type="Gene3D" id="3.40.50.720">
    <property type="entry name" value="NAD(P)-binding Rossmann-like Domain"/>
    <property type="match status" value="1"/>
</dbReference>
<dbReference type="HAMAP" id="MF_00394">
    <property type="entry name" value="NAD_Glyc3P_dehydrog"/>
    <property type="match status" value="1"/>
</dbReference>
<dbReference type="InterPro" id="IPR008927">
    <property type="entry name" value="6-PGluconate_DH-like_C_sf"/>
</dbReference>
<dbReference type="InterPro" id="IPR013328">
    <property type="entry name" value="6PGD_dom2"/>
</dbReference>
<dbReference type="InterPro" id="IPR006168">
    <property type="entry name" value="G3P_DH_NAD-dep"/>
</dbReference>
<dbReference type="InterPro" id="IPR006109">
    <property type="entry name" value="G3P_DH_NAD-dep_C"/>
</dbReference>
<dbReference type="InterPro" id="IPR011128">
    <property type="entry name" value="G3P_DH_NAD-dep_N"/>
</dbReference>
<dbReference type="InterPro" id="IPR036291">
    <property type="entry name" value="NAD(P)-bd_dom_sf"/>
</dbReference>
<dbReference type="NCBIfam" id="NF000940">
    <property type="entry name" value="PRK00094.1-2"/>
    <property type="match status" value="1"/>
</dbReference>
<dbReference type="NCBIfam" id="NF000941">
    <property type="entry name" value="PRK00094.1-3"/>
    <property type="match status" value="1"/>
</dbReference>
<dbReference type="NCBIfam" id="NF000942">
    <property type="entry name" value="PRK00094.1-4"/>
    <property type="match status" value="1"/>
</dbReference>
<dbReference type="PANTHER" id="PTHR11728">
    <property type="entry name" value="GLYCEROL-3-PHOSPHATE DEHYDROGENASE"/>
    <property type="match status" value="1"/>
</dbReference>
<dbReference type="PANTHER" id="PTHR11728:SF1">
    <property type="entry name" value="GLYCEROL-3-PHOSPHATE DEHYDROGENASE [NAD(+)] 2, CHLOROPLASTIC"/>
    <property type="match status" value="1"/>
</dbReference>
<dbReference type="Pfam" id="PF07479">
    <property type="entry name" value="NAD_Gly3P_dh_C"/>
    <property type="match status" value="1"/>
</dbReference>
<dbReference type="Pfam" id="PF01210">
    <property type="entry name" value="NAD_Gly3P_dh_N"/>
    <property type="match status" value="1"/>
</dbReference>
<dbReference type="PIRSF" id="PIRSF000114">
    <property type="entry name" value="Glycerol-3-P_dh"/>
    <property type="match status" value="1"/>
</dbReference>
<dbReference type="PRINTS" id="PR00077">
    <property type="entry name" value="GPDHDRGNASE"/>
</dbReference>
<dbReference type="SUPFAM" id="SSF48179">
    <property type="entry name" value="6-phosphogluconate dehydrogenase C-terminal domain-like"/>
    <property type="match status" value="1"/>
</dbReference>
<dbReference type="SUPFAM" id="SSF51735">
    <property type="entry name" value="NAD(P)-binding Rossmann-fold domains"/>
    <property type="match status" value="1"/>
</dbReference>
<dbReference type="PROSITE" id="PS00957">
    <property type="entry name" value="NAD_G3PDH"/>
    <property type="match status" value="1"/>
</dbReference>
<feature type="chain" id="PRO_0000138024" description="Glycerol-3-phosphate dehydrogenase [NAD(P)+]">
    <location>
        <begin position="1"/>
        <end position="332"/>
    </location>
</feature>
<feature type="active site" description="Proton acceptor" evidence="1">
    <location>
        <position position="192"/>
    </location>
</feature>
<feature type="binding site" evidence="1">
    <location>
        <position position="11"/>
    </location>
    <ligand>
        <name>NADPH</name>
        <dbReference type="ChEBI" id="CHEBI:57783"/>
    </ligand>
</feature>
<feature type="binding site" evidence="1">
    <location>
        <position position="12"/>
    </location>
    <ligand>
        <name>NADPH</name>
        <dbReference type="ChEBI" id="CHEBI:57783"/>
    </ligand>
</feature>
<feature type="binding site" evidence="1">
    <location>
        <position position="32"/>
    </location>
    <ligand>
        <name>NADPH</name>
        <dbReference type="ChEBI" id="CHEBI:57783"/>
    </ligand>
</feature>
<feature type="binding site" evidence="1">
    <location>
        <position position="106"/>
    </location>
    <ligand>
        <name>NADPH</name>
        <dbReference type="ChEBI" id="CHEBI:57783"/>
    </ligand>
</feature>
<feature type="binding site" evidence="1">
    <location>
        <position position="106"/>
    </location>
    <ligand>
        <name>sn-glycerol 3-phosphate</name>
        <dbReference type="ChEBI" id="CHEBI:57597"/>
    </ligand>
</feature>
<feature type="binding site" evidence="1">
    <location>
        <position position="137"/>
    </location>
    <ligand>
        <name>sn-glycerol 3-phosphate</name>
        <dbReference type="ChEBI" id="CHEBI:57597"/>
    </ligand>
</feature>
<feature type="binding site" evidence="1">
    <location>
        <position position="139"/>
    </location>
    <ligand>
        <name>sn-glycerol 3-phosphate</name>
        <dbReference type="ChEBI" id="CHEBI:57597"/>
    </ligand>
</feature>
<feature type="binding site" evidence="1">
    <location>
        <position position="141"/>
    </location>
    <ligand>
        <name>NADPH</name>
        <dbReference type="ChEBI" id="CHEBI:57783"/>
    </ligand>
</feature>
<feature type="binding site" evidence="1">
    <location>
        <position position="192"/>
    </location>
    <ligand>
        <name>sn-glycerol 3-phosphate</name>
        <dbReference type="ChEBI" id="CHEBI:57597"/>
    </ligand>
</feature>
<feature type="binding site" evidence="1">
    <location>
        <position position="245"/>
    </location>
    <ligand>
        <name>sn-glycerol 3-phosphate</name>
        <dbReference type="ChEBI" id="CHEBI:57597"/>
    </ligand>
</feature>
<feature type="binding site" evidence="1">
    <location>
        <position position="255"/>
    </location>
    <ligand>
        <name>sn-glycerol 3-phosphate</name>
        <dbReference type="ChEBI" id="CHEBI:57597"/>
    </ligand>
</feature>
<feature type="binding site" evidence="1">
    <location>
        <position position="256"/>
    </location>
    <ligand>
        <name>NADPH</name>
        <dbReference type="ChEBI" id="CHEBI:57783"/>
    </ligand>
</feature>
<feature type="binding site" evidence="1">
    <location>
        <position position="256"/>
    </location>
    <ligand>
        <name>sn-glycerol 3-phosphate</name>
        <dbReference type="ChEBI" id="CHEBI:57597"/>
    </ligand>
</feature>
<feature type="binding site" evidence="1">
    <location>
        <position position="257"/>
    </location>
    <ligand>
        <name>sn-glycerol 3-phosphate</name>
        <dbReference type="ChEBI" id="CHEBI:57597"/>
    </ligand>
</feature>
<feature type="binding site" evidence="1">
    <location>
        <position position="280"/>
    </location>
    <ligand>
        <name>NADPH</name>
        <dbReference type="ChEBI" id="CHEBI:57783"/>
    </ligand>
</feature>
<feature type="binding site" evidence="1">
    <location>
        <position position="282"/>
    </location>
    <ligand>
        <name>NADPH</name>
        <dbReference type="ChEBI" id="CHEBI:57783"/>
    </ligand>
</feature>